<feature type="chain" id="PRO_0000223093" description="Uncharacterized protein ECU10_0060/ECU11_2080i">
    <location>
        <begin position="1"/>
        <end position="161"/>
    </location>
</feature>
<organism>
    <name type="scientific">Encephalitozoon cuniculi (strain GB-M1)</name>
    <name type="common">Microsporidian parasite</name>
    <dbReference type="NCBI Taxonomy" id="284813"/>
    <lineage>
        <taxon>Eukaryota</taxon>
        <taxon>Fungi</taxon>
        <taxon>Fungi incertae sedis</taxon>
        <taxon>Microsporidia</taxon>
        <taxon>Unikaryonidae</taxon>
        <taxon>Encephalitozoon</taxon>
    </lineage>
</organism>
<gene>
    <name type="ordered locus">ECU10_0060</name>
</gene>
<gene>
    <name type="ordered locus">ECU11_2080i</name>
</gene>
<accession>Q8STI4</accession>
<dbReference type="EMBL" id="AL590449">
    <property type="protein sequence ID" value="CAD25726.2"/>
    <property type="molecule type" value="Genomic_DNA"/>
</dbReference>
<dbReference type="EMBL" id="AL590450">
    <property type="protein sequence ID" value="CAD26117.2"/>
    <property type="molecule type" value="Genomic_DNA"/>
</dbReference>
<dbReference type="RefSeq" id="NP_586111.1">
    <property type="nucleotide sequence ID" value="NM_001041733.1"/>
</dbReference>
<dbReference type="RefSeq" id="NP_586122.2">
    <property type="nucleotide sequence ID" value="NM_001041955.2"/>
</dbReference>
<dbReference type="RefSeq" id="NP_586513.1">
    <property type="nucleotide sequence ID" value="NM_001042346.1"/>
</dbReference>
<dbReference type="SMR" id="Q8STI4"/>
<dbReference type="STRING" id="284813.Q8STI4"/>
<dbReference type="GeneID" id="859768"/>
<dbReference type="GeneID" id="860168"/>
<dbReference type="KEGG" id="ecu:ECU07_1840"/>
<dbReference type="KEGG" id="ecu:ECU10_0060"/>
<dbReference type="KEGG" id="ecu:ECU11_2080i"/>
<dbReference type="VEuPathDB" id="MicrosporidiaDB:ECU07_1840"/>
<dbReference type="VEuPathDB" id="MicrosporidiaDB:ECU10_0060"/>
<dbReference type="VEuPathDB" id="MicrosporidiaDB:ECU11_2080i"/>
<dbReference type="HOGENOM" id="CLU_121572_0_0_1"/>
<dbReference type="InParanoid" id="Q8STI4"/>
<dbReference type="OrthoDB" id="277029at2759"/>
<dbReference type="Proteomes" id="UP000000819">
    <property type="component" value="Chromosome X"/>
</dbReference>
<dbReference type="Proteomes" id="UP000000819">
    <property type="component" value="Chromosome XI"/>
</dbReference>
<dbReference type="GO" id="GO:0005634">
    <property type="term" value="C:nucleus"/>
    <property type="evidence" value="ECO:0007669"/>
    <property type="project" value="TreeGrafter"/>
</dbReference>
<dbReference type="GO" id="GO:0000994">
    <property type="term" value="F:RNA polymerase III core binding"/>
    <property type="evidence" value="ECO:0007669"/>
    <property type="project" value="TreeGrafter"/>
</dbReference>
<dbReference type="GO" id="GO:0016480">
    <property type="term" value="P:negative regulation of transcription by RNA polymerase III"/>
    <property type="evidence" value="ECO:0007669"/>
    <property type="project" value="InterPro"/>
</dbReference>
<dbReference type="Gene3D" id="3.40.1000.50">
    <property type="entry name" value="Repressor of RNA polymerase III transcription Maf1"/>
    <property type="match status" value="1"/>
</dbReference>
<dbReference type="InterPro" id="IPR015257">
    <property type="entry name" value="Maf1"/>
</dbReference>
<dbReference type="InterPro" id="IPR038564">
    <property type="entry name" value="Maf1_sf"/>
</dbReference>
<dbReference type="PANTHER" id="PTHR22504">
    <property type="entry name" value="REPRESSOR OF RNA POLYMERASE III TRANSCRIPTION MAF1"/>
    <property type="match status" value="1"/>
</dbReference>
<dbReference type="PANTHER" id="PTHR22504:SF0">
    <property type="entry name" value="REPRESSOR OF RNA POLYMERASE III TRANSCRIPTION MAF1 HOMOLOG"/>
    <property type="match status" value="1"/>
</dbReference>
<dbReference type="Pfam" id="PF09174">
    <property type="entry name" value="Maf1"/>
    <property type="match status" value="1"/>
</dbReference>
<keyword id="KW-1185">Reference proteome</keyword>
<reference key="1">
    <citation type="journal article" date="2001" name="Nature">
        <title>Genome sequence and gene compaction of the eukaryote parasite Encephalitozoon cuniculi.</title>
        <authorList>
            <person name="Katinka M.D."/>
            <person name="Duprat S."/>
            <person name="Cornillot E."/>
            <person name="Metenier G."/>
            <person name="Thomarat F."/>
            <person name="Prensier G."/>
            <person name="Barbe V."/>
            <person name="Peyretaillade E."/>
            <person name="Brottier P."/>
            <person name="Wincker P."/>
            <person name="Delbac F."/>
            <person name="El Alaoui H."/>
            <person name="Peyret P."/>
            <person name="Saurin W."/>
            <person name="Gouy M."/>
            <person name="Weissenbach J."/>
            <person name="Vivares C.P."/>
        </authorList>
    </citation>
    <scope>NUCLEOTIDE SEQUENCE [LARGE SCALE GENOMIC DNA]</scope>
    <source>
        <strain>GB-M1</strain>
    </source>
</reference>
<reference key="2">
    <citation type="journal article" date="2009" name="BMC Genomics">
        <title>Identification of transcriptional signals in Encephalitozoon cuniculi widespread among Microsporidia phylum: support for accurate structural genome annotation.</title>
        <authorList>
            <person name="Peyretaillade E."/>
            <person name="Goncalves O."/>
            <person name="Terrat S."/>
            <person name="Dugat-Bony E."/>
            <person name="Wincker P."/>
            <person name="Cornman R.S."/>
            <person name="Evans J.D."/>
            <person name="Delbac F."/>
            <person name="Peyret P."/>
        </authorList>
    </citation>
    <scope>GENOME REANNOTATION</scope>
    <source>
        <strain>GB-M1</strain>
    </source>
</reference>
<protein>
    <recommendedName>
        <fullName>Uncharacterized protein ECU10_0060/ECU11_2080i</fullName>
    </recommendedName>
</protein>
<name>YA60_ENCCU</name>
<sequence length="161" mass="18966">MRYLELGCISKTNKLFQKLQDLNPLLNIEIEAYSCKSSRRQRGRFVEKPLGYLLSALELRFPDYDFCGESWGSFRRKTLAEVLNEMTYSISTTHKNSDDVKEFVGFLEVILHRSVSLGGCEIFSYENRMGPFEDCLWYFSFLFFNKKQRRVVMLNAFMSRS</sequence>
<proteinExistence type="predicted"/>